<sequence length="150" mass="17475">MIVIINASNEQHDLKFSLANLDAIVKEVIQKEQQTCDEVNIYFVDTATICKLHLDYFNDDTPTDCISFPMDKDENSPYKILGEIFVCPQTAIEYALSHELDPYEETTLYLVHGLLHLMGYDDLEENDFLIMKEAEIRHMTHLKKLELYIK</sequence>
<name>YBEY_PARUW</name>
<protein>
    <recommendedName>
        <fullName evidence="1">Endoribonuclease YbeY</fullName>
        <ecNumber evidence="1">3.1.-.-</ecNumber>
    </recommendedName>
</protein>
<organism>
    <name type="scientific">Protochlamydia amoebophila (strain UWE25)</name>
    <dbReference type="NCBI Taxonomy" id="264201"/>
    <lineage>
        <taxon>Bacteria</taxon>
        <taxon>Pseudomonadati</taxon>
        <taxon>Chlamydiota</taxon>
        <taxon>Chlamydiia</taxon>
        <taxon>Parachlamydiales</taxon>
        <taxon>Parachlamydiaceae</taxon>
        <taxon>Candidatus Protochlamydia</taxon>
    </lineage>
</organism>
<dbReference type="EC" id="3.1.-.-" evidence="1"/>
<dbReference type="EMBL" id="BX908798">
    <property type="protein sequence ID" value="CAF23778.1"/>
    <property type="molecule type" value="Genomic_DNA"/>
</dbReference>
<dbReference type="SMR" id="Q6MCC1"/>
<dbReference type="STRING" id="264201.pc1054"/>
<dbReference type="KEGG" id="pcu:PC_RS05075"/>
<dbReference type="eggNOG" id="COG0319">
    <property type="taxonomic scope" value="Bacteria"/>
</dbReference>
<dbReference type="HOGENOM" id="CLU_106710_3_2_0"/>
<dbReference type="OrthoDB" id="9807740at2"/>
<dbReference type="Proteomes" id="UP000000529">
    <property type="component" value="Chromosome"/>
</dbReference>
<dbReference type="GO" id="GO:0005737">
    <property type="term" value="C:cytoplasm"/>
    <property type="evidence" value="ECO:0007669"/>
    <property type="project" value="UniProtKB-SubCell"/>
</dbReference>
<dbReference type="GO" id="GO:0004222">
    <property type="term" value="F:metalloendopeptidase activity"/>
    <property type="evidence" value="ECO:0007669"/>
    <property type="project" value="InterPro"/>
</dbReference>
<dbReference type="GO" id="GO:0004521">
    <property type="term" value="F:RNA endonuclease activity"/>
    <property type="evidence" value="ECO:0007669"/>
    <property type="project" value="UniProtKB-UniRule"/>
</dbReference>
<dbReference type="GO" id="GO:0008270">
    <property type="term" value="F:zinc ion binding"/>
    <property type="evidence" value="ECO:0007669"/>
    <property type="project" value="UniProtKB-UniRule"/>
</dbReference>
<dbReference type="GO" id="GO:0006364">
    <property type="term" value="P:rRNA processing"/>
    <property type="evidence" value="ECO:0007669"/>
    <property type="project" value="UniProtKB-UniRule"/>
</dbReference>
<dbReference type="Gene3D" id="3.40.390.30">
    <property type="entry name" value="Metalloproteases ('zincins'), catalytic domain"/>
    <property type="match status" value="1"/>
</dbReference>
<dbReference type="HAMAP" id="MF_00009">
    <property type="entry name" value="Endoribonucl_YbeY"/>
    <property type="match status" value="1"/>
</dbReference>
<dbReference type="InterPro" id="IPR023091">
    <property type="entry name" value="MetalPrtase_cat_dom_sf_prd"/>
</dbReference>
<dbReference type="InterPro" id="IPR002036">
    <property type="entry name" value="YbeY"/>
</dbReference>
<dbReference type="InterPro" id="IPR020549">
    <property type="entry name" value="YbeY_CS"/>
</dbReference>
<dbReference type="NCBIfam" id="TIGR00043">
    <property type="entry name" value="rRNA maturation RNase YbeY"/>
    <property type="match status" value="1"/>
</dbReference>
<dbReference type="PANTHER" id="PTHR46986">
    <property type="entry name" value="ENDORIBONUCLEASE YBEY, CHLOROPLASTIC"/>
    <property type="match status" value="1"/>
</dbReference>
<dbReference type="PANTHER" id="PTHR46986:SF1">
    <property type="entry name" value="ENDORIBONUCLEASE YBEY, CHLOROPLASTIC"/>
    <property type="match status" value="1"/>
</dbReference>
<dbReference type="Pfam" id="PF02130">
    <property type="entry name" value="YbeY"/>
    <property type="match status" value="1"/>
</dbReference>
<dbReference type="SUPFAM" id="SSF55486">
    <property type="entry name" value="Metalloproteases ('zincins'), catalytic domain"/>
    <property type="match status" value="1"/>
</dbReference>
<dbReference type="PROSITE" id="PS01306">
    <property type="entry name" value="UPF0054"/>
    <property type="match status" value="1"/>
</dbReference>
<reference key="1">
    <citation type="journal article" date="2004" name="Science">
        <title>Illuminating the evolutionary history of chlamydiae.</title>
        <authorList>
            <person name="Horn M."/>
            <person name="Collingro A."/>
            <person name="Schmitz-Esser S."/>
            <person name="Beier C.L."/>
            <person name="Purkhold U."/>
            <person name="Fartmann B."/>
            <person name="Brandt P."/>
            <person name="Nyakatura G.J."/>
            <person name="Droege M."/>
            <person name="Frishman D."/>
            <person name="Rattei T."/>
            <person name="Mewes H.-W."/>
            <person name="Wagner M."/>
        </authorList>
    </citation>
    <scope>NUCLEOTIDE SEQUENCE [LARGE SCALE GENOMIC DNA]</scope>
    <source>
        <strain>UWE25</strain>
    </source>
</reference>
<keyword id="KW-0963">Cytoplasm</keyword>
<keyword id="KW-0255">Endonuclease</keyword>
<keyword id="KW-0378">Hydrolase</keyword>
<keyword id="KW-0479">Metal-binding</keyword>
<keyword id="KW-0540">Nuclease</keyword>
<keyword id="KW-1185">Reference proteome</keyword>
<keyword id="KW-0690">Ribosome biogenesis</keyword>
<keyword id="KW-0698">rRNA processing</keyword>
<keyword id="KW-0862">Zinc</keyword>
<proteinExistence type="inferred from homology"/>
<accession>Q6MCC1</accession>
<gene>
    <name evidence="1" type="primary">ybeY</name>
    <name type="ordered locus">pc1054</name>
</gene>
<comment type="function">
    <text evidence="1">Single strand-specific metallo-endoribonuclease involved in late-stage 70S ribosome quality control and in maturation of the 3' terminus of the 16S rRNA.</text>
</comment>
<comment type="cofactor">
    <cofactor evidence="1">
        <name>Zn(2+)</name>
        <dbReference type="ChEBI" id="CHEBI:29105"/>
    </cofactor>
    <text evidence="1">Binds 1 zinc ion.</text>
</comment>
<comment type="subcellular location">
    <subcellularLocation>
        <location evidence="1">Cytoplasm</location>
    </subcellularLocation>
</comment>
<comment type="similarity">
    <text evidence="1">Belongs to the endoribonuclease YbeY family.</text>
</comment>
<evidence type="ECO:0000255" key="1">
    <source>
        <dbReference type="HAMAP-Rule" id="MF_00009"/>
    </source>
</evidence>
<feature type="chain" id="PRO_0000102501" description="Endoribonuclease YbeY">
    <location>
        <begin position="1"/>
        <end position="150"/>
    </location>
</feature>
<feature type="binding site" evidence="1">
    <location>
        <position position="112"/>
    </location>
    <ligand>
        <name>Zn(2+)</name>
        <dbReference type="ChEBI" id="CHEBI:29105"/>
        <note>catalytic</note>
    </ligand>
</feature>
<feature type="binding site" evidence="1">
    <location>
        <position position="116"/>
    </location>
    <ligand>
        <name>Zn(2+)</name>
        <dbReference type="ChEBI" id="CHEBI:29105"/>
        <note>catalytic</note>
    </ligand>
</feature>
<feature type="binding site" evidence="1">
    <location>
        <position position="122"/>
    </location>
    <ligand>
        <name>Zn(2+)</name>
        <dbReference type="ChEBI" id="CHEBI:29105"/>
        <note>catalytic</note>
    </ligand>
</feature>